<dbReference type="EC" id="1.2.1.10" evidence="1"/>
<dbReference type="EMBL" id="AP011115">
    <property type="protein sequence ID" value="BAH52696.1"/>
    <property type="molecule type" value="Genomic_DNA"/>
</dbReference>
<dbReference type="RefSeq" id="WP_012691620.1">
    <property type="nucleotide sequence ID" value="NC_012522.1"/>
</dbReference>
<dbReference type="SMR" id="C1BAJ3"/>
<dbReference type="STRING" id="632772.ROP_44490"/>
<dbReference type="KEGG" id="rop:ROP_44490"/>
<dbReference type="PATRIC" id="fig|632772.20.peg.4656"/>
<dbReference type="HOGENOM" id="CLU_062208_0_0_11"/>
<dbReference type="OrthoDB" id="9786743at2"/>
<dbReference type="Proteomes" id="UP000002212">
    <property type="component" value="Chromosome"/>
</dbReference>
<dbReference type="GO" id="GO:0008774">
    <property type="term" value="F:acetaldehyde dehydrogenase (acetylating) activity"/>
    <property type="evidence" value="ECO:0007669"/>
    <property type="project" value="UniProtKB-UniRule"/>
</dbReference>
<dbReference type="GO" id="GO:0051287">
    <property type="term" value="F:NAD binding"/>
    <property type="evidence" value="ECO:0007669"/>
    <property type="project" value="UniProtKB-UniRule"/>
</dbReference>
<dbReference type="GO" id="GO:0009056">
    <property type="term" value="P:catabolic process"/>
    <property type="evidence" value="ECO:0007669"/>
    <property type="project" value="UniProtKB-KW"/>
</dbReference>
<dbReference type="CDD" id="cd23933">
    <property type="entry name" value="ALDH_C"/>
    <property type="match status" value="1"/>
</dbReference>
<dbReference type="Gene3D" id="3.30.360.10">
    <property type="entry name" value="Dihydrodipicolinate Reductase, domain 2"/>
    <property type="match status" value="1"/>
</dbReference>
<dbReference type="Gene3D" id="3.40.50.720">
    <property type="entry name" value="NAD(P)-binding Rossmann-like Domain"/>
    <property type="match status" value="1"/>
</dbReference>
<dbReference type="HAMAP" id="MF_01657">
    <property type="entry name" value="Ac_ald_DH_ac"/>
    <property type="match status" value="1"/>
</dbReference>
<dbReference type="InterPro" id="IPR003361">
    <property type="entry name" value="Acetaldehyde_dehydrogenase"/>
</dbReference>
<dbReference type="InterPro" id="IPR015426">
    <property type="entry name" value="Acetylaldehyde_DH_C"/>
</dbReference>
<dbReference type="InterPro" id="IPR036291">
    <property type="entry name" value="NAD(P)-bd_dom_sf"/>
</dbReference>
<dbReference type="InterPro" id="IPR000534">
    <property type="entry name" value="Semialdehyde_DH_NAD-bd"/>
</dbReference>
<dbReference type="NCBIfam" id="TIGR03215">
    <property type="entry name" value="ac_ald_DH_ac"/>
    <property type="match status" value="1"/>
</dbReference>
<dbReference type="NCBIfam" id="NF006157">
    <property type="entry name" value="PRK08300.1"/>
    <property type="match status" value="1"/>
</dbReference>
<dbReference type="Pfam" id="PF09290">
    <property type="entry name" value="AcetDehyd-dimer"/>
    <property type="match status" value="1"/>
</dbReference>
<dbReference type="PIRSF" id="PIRSF015689">
    <property type="entry name" value="Actaldh_dh_actl"/>
    <property type="match status" value="1"/>
</dbReference>
<dbReference type="SMART" id="SM00859">
    <property type="entry name" value="Semialdhyde_dh"/>
    <property type="match status" value="1"/>
</dbReference>
<dbReference type="SUPFAM" id="SSF55347">
    <property type="entry name" value="Glyceraldehyde-3-phosphate dehydrogenase-like, C-terminal domain"/>
    <property type="match status" value="1"/>
</dbReference>
<dbReference type="SUPFAM" id="SSF51735">
    <property type="entry name" value="NAD(P)-binding Rossmann-fold domains"/>
    <property type="match status" value="1"/>
</dbReference>
<organism>
    <name type="scientific">Rhodococcus opacus (strain B4)</name>
    <dbReference type="NCBI Taxonomy" id="632772"/>
    <lineage>
        <taxon>Bacteria</taxon>
        <taxon>Bacillati</taxon>
        <taxon>Actinomycetota</taxon>
        <taxon>Actinomycetes</taxon>
        <taxon>Mycobacteriales</taxon>
        <taxon>Nocardiaceae</taxon>
        <taxon>Rhodococcus</taxon>
    </lineage>
</organism>
<gene>
    <name type="ordered locus">ROP_44490</name>
</gene>
<accession>C1BAJ3</accession>
<sequence length="300" mass="31756">MTKASVAIVGSGNISTDLLYKLQRSEWLEPRWMIGIDPESEGLARARTMGLETSAEGVGWLLNQPEKPDLVFEATSAHVHRDSAPRYEAAGIRAVDLTPAAVGPAVVPPANLREHLGAPNVNMITCGGQATIPIVYAVSRVVDVPYAEIVASVASVSAGPGTRANIDEFTKTTSRGIETIGGAQRGKAIIILNPADPPMIMRDTIFCAIPEDADRAAITDSIHRVVADIQQYVPGYRLLNEPQFDDPSVVSGGQATVTTFVEVEGAGDFLPPYAGNLDIMTAAATKVGEEIAQKLLSVEA</sequence>
<evidence type="ECO:0000255" key="1">
    <source>
        <dbReference type="HAMAP-Rule" id="MF_01657"/>
    </source>
</evidence>
<reference key="1">
    <citation type="submission" date="2009-03" db="EMBL/GenBank/DDBJ databases">
        <title>Comparison of the complete genome sequences of Rhodococcus erythropolis PR4 and Rhodococcus opacus B4.</title>
        <authorList>
            <person name="Takarada H."/>
            <person name="Sekine M."/>
            <person name="Hosoyama A."/>
            <person name="Yamada R."/>
            <person name="Fujisawa T."/>
            <person name="Omata S."/>
            <person name="Shimizu A."/>
            <person name="Tsukatani N."/>
            <person name="Tanikawa S."/>
            <person name="Fujita N."/>
            <person name="Harayama S."/>
        </authorList>
    </citation>
    <scope>NUCLEOTIDE SEQUENCE [LARGE SCALE GENOMIC DNA]</scope>
    <source>
        <strain>B4</strain>
    </source>
</reference>
<protein>
    <recommendedName>
        <fullName evidence="1">Acetaldehyde dehydrogenase 3</fullName>
        <ecNumber evidence="1">1.2.1.10</ecNumber>
    </recommendedName>
    <alternativeName>
        <fullName evidence="1">Acetaldehyde dehydrogenase [acetylating] 3</fullName>
    </alternativeName>
</protein>
<name>ACDH3_RHOOB</name>
<keyword id="KW-0058">Aromatic hydrocarbons catabolism</keyword>
<keyword id="KW-0520">NAD</keyword>
<keyword id="KW-0560">Oxidoreductase</keyword>
<comment type="catalytic activity">
    <reaction evidence="1">
        <text>acetaldehyde + NAD(+) + CoA = acetyl-CoA + NADH + H(+)</text>
        <dbReference type="Rhea" id="RHEA:23288"/>
        <dbReference type="ChEBI" id="CHEBI:15343"/>
        <dbReference type="ChEBI" id="CHEBI:15378"/>
        <dbReference type="ChEBI" id="CHEBI:57287"/>
        <dbReference type="ChEBI" id="CHEBI:57288"/>
        <dbReference type="ChEBI" id="CHEBI:57540"/>
        <dbReference type="ChEBI" id="CHEBI:57945"/>
        <dbReference type="EC" id="1.2.1.10"/>
    </reaction>
</comment>
<comment type="similarity">
    <text evidence="1">Belongs to the acetaldehyde dehydrogenase family.</text>
</comment>
<proteinExistence type="inferred from homology"/>
<feature type="chain" id="PRO_0000387722" description="Acetaldehyde dehydrogenase 3">
    <location>
        <begin position="1"/>
        <end position="300"/>
    </location>
</feature>
<feature type="active site" description="Acyl-thioester intermediate" evidence="1">
    <location>
        <position position="126"/>
    </location>
</feature>
<feature type="binding site" evidence="1">
    <location>
        <begin position="11"/>
        <end position="14"/>
    </location>
    <ligand>
        <name>NAD(+)</name>
        <dbReference type="ChEBI" id="CHEBI:57540"/>
    </ligand>
</feature>
<feature type="binding site" evidence="1">
    <location>
        <begin position="157"/>
        <end position="165"/>
    </location>
    <ligand>
        <name>NAD(+)</name>
        <dbReference type="ChEBI" id="CHEBI:57540"/>
    </ligand>
</feature>
<feature type="binding site" evidence="1">
    <location>
        <position position="276"/>
    </location>
    <ligand>
        <name>NAD(+)</name>
        <dbReference type="ChEBI" id="CHEBI:57540"/>
    </ligand>
</feature>